<reference key="1">
    <citation type="journal article" date="2004" name="Nucleic Acids Res.">
        <title>Rapid evolution of RNA editing sites in a small non-essential plastid gene.</title>
        <authorList>
            <person name="Fiebig A."/>
            <person name="Stegemann S."/>
            <person name="Bock R."/>
        </authorList>
    </citation>
    <scope>NUCLEOTIDE SEQUENCE [GENOMIC DNA]</scope>
    <scope>RNA EDITING</scope>
    <source>
        <tissue>Leaf</tissue>
    </source>
</reference>
<dbReference type="EMBL" id="AJ704420">
    <property type="protein sequence ID" value="CAG28632.1"/>
    <property type="molecule type" value="Genomic_DNA"/>
</dbReference>
<dbReference type="SMR" id="Q5K3U4"/>
<dbReference type="GO" id="GO:0009535">
    <property type="term" value="C:chloroplast thylakoid membrane"/>
    <property type="evidence" value="ECO:0007669"/>
    <property type="project" value="UniProtKB-SubCell"/>
</dbReference>
<dbReference type="GO" id="GO:0009512">
    <property type="term" value="C:cytochrome b6f complex"/>
    <property type="evidence" value="ECO:0007669"/>
    <property type="project" value="InterPro"/>
</dbReference>
<dbReference type="GO" id="GO:0045158">
    <property type="term" value="F:electron transporter, transferring electrons within cytochrome b6/f complex of photosystem II activity"/>
    <property type="evidence" value="ECO:0007669"/>
    <property type="project" value="UniProtKB-UniRule"/>
</dbReference>
<dbReference type="GO" id="GO:0015979">
    <property type="term" value="P:photosynthesis"/>
    <property type="evidence" value="ECO:0007669"/>
    <property type="project" value="UniProtKB-KW"/>
</dbReference>
<dbReference type="HAMAP" id="MF_00433">
    <property type="entry name" value="Cytb6_f_PetL"/>
    <property type="match status" value="1"/>
</dbReference>
<dbReference type="InterPro" id="IPR007802">
    <property type="entry name" value="Cyt_b6/f_cplx_su6"/>
</dbReference>
<dbReference type="PANTHER" id="PTHR37266">
    <property type="entry name" value="CYTOCHROME B6-F COMPLEX SUBUNIT 6"/>
    <property type="match status" value="1"/>
</dbReference>
<dbReference type="PANTHER" id="PTHR37266:SF1">
    <property type="entry name" value="CYTOCHROME B6-F COMPLEX SUBUNIT 6"/>
    <property type="match status" value="1"/>
</dbReference>
<dbReference type="Pfam" id="PF05115">
    <property type="entry name" value="PetL"/>
    <property type="match status" value="1"/>
</dbReference>
<dbReference type="SUPFAM" id="SSF103436">
    <property type="entry name" value="PetL subunit of the cytochrome b6f complex"/>
    <property type="match status" value="1"/>
</dbReference>
<proteinExistence type="evidence at transcript level"/>
<geneLocation type="chloroplast"/>
<name>PETL_MAGGA</name>
<protein>
    <recommendedName>
        <fullName evidence="1">Cytochrome b6-f complex subunit 6</fullName>
    </recommendedName>
    <alternativeName>
        <fullName evidence="1">Cytochrome b6-f complex subunit PetL</fullName>
    </alternativeName>
    <alternativeName>
        <fullName evidence="1">Cytochrome b6-f complex subunit VI</fullName>
    </alternativeName>
</protein>
<feature type="chain" id="PRO_0000220454" description="Cytochrome b6-f complex subunit 6">
    <location>
        <begin position="1"/>
        <end position="31"/>
    </location>
</feature>
<feature type="transmembrane region" description="Helical" evidence="1">
    <location>
        <begin position="4"/>
        <end position="24"/>
    </location>
</feature>
<keyword id="KW-0150">Chloroplast</keyword>
<keyword id="KW-0249">Electron transport</keyword>
<keyword id="KW-0472">Membrane</keyword>
<keyword id="KW-0602">Photosynthesis</keyword>
<keyword id="KW-0934">Plastid</keyword>
<keyword id="KW-0691">RNA editing</keyword>
<keyword id="KW-0793">Thylakoid</keyword>
<keyword id="KW-0812">Transmembrane</keyword>
<keyword id="KW-1133">Transmembrane helix</keyword>
<keyword id="KW-0813">Transport</keyword>
<comment type="function">
    <text evidence="1">Component of the cytochrome b6-f complex, which mediates electron transfer between photosystem II (PSII) and photosystem I (PSI), cyclic electron flow around PSI, and state transitions. PetL is important for photoautotrophic growth as well as for electron transfer efficiency and stability of the cytochrome b6-f complex.</text>
</comment>
<comment type="subunit">
    <text evidence="1">The 4 large subunits of the cytochrome b6-f complex are cytochrome b6, subunit IV (17 kDa polypeptide, PetD), cytochrome f and the Rieske protein, while the 4 small subunits are PetG, PetL, PetM and PetN. The complex functions as a dimer.</text>
</comment>
<comment type="subcellular location">
    <subcellularLocation>
        <location evidence="1">Plastid</location>
        <location evidence="1">Chloroplast thylakoid membrane</location>
        <topology evidence="1">Single-pass membrane protein</topology>
    </subcellularLocation>
</comment>
<comment type="RNA editing">
    <location>
        <position position="2" evidence="2"/>
    </location>
    <location>
        <position position="15" evidence="2"/>
    </location>
    <location>
        <position position="19" evidence="2"/>
    </location>
</comment>
<comment type="similarity">
    <text evidence="1">Belongs to the PetL family.</text>
</comment>
<sequence length="31" mass="3355">MLTITSYFGFLLAALTITSALLIGLSKIRLI</sequence>
<evidence type="ECO:0000255" key="1">
    <source>
        <dbReference type="HAMAP-Rule" id="MF_00433"/>
    </source>
</evidence>
<evidence type="ECO:0000269" key="2">
    <source>
    </source>
</evidence>
<accession>Q5K3U4</accession>
<gene>
    <name evidence="1" type="primary">petL</name>
</gene>
<organism>
    <name type="scientific">Magnolia grandiflora</name>
    <name type="common">Southern magnolia</name>
    <dbReference type="NCBI Taxonomy" id="3406"/>
    <lineage>
        <taxon>Eukaryota</taxon>
        <taxon>Viridiplantae</taxon>
        <taxon>Streptophyta</taxon>
        <taxon>Embryophyta</taxon>
        <taxon>Tracheophyta</taxon>
        <taxon>Spermatophyta</taxon>
        <taxon>Magnoliopsida</taxon>
        <taxon>Magnoliidae</taxon>
        <taxon>Magnoliales</taxon>
        <taxon>Magnoliaceae</taxon>
        <taxon>Magnolia</taxon>
    </lineage>
</organism>